<accession>A3NBE8</accession>
<comment type="function">
    <text evidence="1">Could be a mediator in iron transactions between iron acquisition and iron-requiring processes, such as synthesis and/or repair of Fe-S clusters in biosynthetic enzymes.</text>
</comment>
<comment type="similarity">
    <text evidence="1">Belongs to the Fe(2+)-trafficking protein family.</text>
</comment>
<sequence length="91" mass="10376">MARMIHCAKLGKEAEGLDFPPLPGELGKRLYESVSKQAWQDWLKQQTMLINENRLNMADPRARQYLMKQTEKYFFGEGADQASGYVPPAQG</sequence>
<proteinExistence type="inferred from homology"/>
<name>FETP_BURP6</name>
<organism>
    <name type="scientific">Burkholderia pseudomallei (strain 668)</name>
    <dbReference type="NCBI Taxonomy" id="320373"/>
    <lineage>
        <taxon>Bacteria</taxon>
        <taxon>Pseudomonadati</taxon>
        <taxon>Pseudomonadota</taxon>
        <taxon>Betaproteobacteria</taxon>
        <taxon>Burkholderiales</taxon>
        <taxon>Burkholderiaceae</taxon>
        <taxon>Burkholderia</taxon>
        <taxon>pseudomallei group</taxon>
    </lineage>
</organism>
<dbReference type="EMBL" id="CP000570">
    <property type="protein sequence ID" value="ABN83894.1"/>
    <property type="molecule type" value="Genomic_DNA"/>
</dbReference>
<dbReference type="RefSeq" id="WP_004193961.1">
    <property type="nucleotide sequence ID" value="NC_009074.1"/>
</dbReference>
<dbReference type="BMRB" id="A3NBE8"/>
<dbReference type="SMR" id="A3NBE8"/>
<dbReference type="KEGG" id="bpd:BURPS668_2644"/>
<dbReference type="HOGENOM" id="CLU_170994_0_0_4"/>
<dbReference type="GO" id="GO:0005829">
    <property type="term" value="C:cytosol"/>
    <property type="evidence" value="ECO:0007669"/>
    <property type="project" value="TreeGrafter"/>
</dbReference>
<dbReference type="GO" id="GO:0005506">
    <property type="term" value="F:iron ion binding"/>
    <property type="evidence" value="ECO:0007669"/>
    <property type="project" value="UniProtKB-UniRule"/>
</dbReference>
<dbReference type="GO" id="GO:0034599">
    <property type="term" value="P:cellular response to oxidative stress"/>
    <property type="evidence" value="ECO:0007669"/>
    <property type="project" value="TreeGrafter"/>
</dbReference>
<dbReference type="FunFam" id="1.10.3880.10:FF:000001">
    <property type="entry name" value="Probable Fe(2+)-trafficking protein"/>
    <property type="match status" value="1"/>
</dbReference>
<dbReference type="Gene3D" id="1.10.3880.10">
    <property type="entry name" value="Fe(II) trafficking protein YggX"/>
    <property type="match status" value="1"/>
</dbReference>
<dbReference type="HAMAP" id="MF_00686">
    <property type="entry name" value="Fe_traffic_YggX"/>
    <property type="match status" value="1"/>
</dbReference>
<dbReference type="InterPro" id="IPR007457">
    <property type="entry name" value="Fe_traffick_prot_YggX"/>
</dbReference>
<dbReference type="InterPro" id="IPR036766">
    <property type="entry name" value="Fe_traffick_prot_YggX_sf"/>
</dbReference>
<dbReference type="NCBIfam" id="NF003817">
    <property type="entry name" value="PRK05408.1"/>
    <property type="match status" value="1"/>
</dbReference>
<dbReference type="PANTHER" id="PTHR36965">
    <property type="entry name" value="FE(2+)-TRAFFICKING PROTEIN-RELATED"/>
    <property type="match status" value="1"/>
</dbReference>
<dbReference type="PANTHER" id="PTHR36965:SF1">
    <property type="entry name" value="FE(2+)-TRAFFICKING PROTEIN-RELATED"/>
    <property type="match status" value="1"/>
</dbReference>
<dbReference type="Pfam" id="PF04362">
    <property type="entry name" value="Iron_traffic"/>
    <property type="match status" value="1"/>
</dbReference>
<dbReference type="PIRSF" id="PIRSF029827">
    <property type="entry name" value="Fe_traffic_YggX"/>
    <property type="match status" value="1"/>
</dbReference>
<dbReference type="SUPFAM" id="SSF111148">
    <property type="entry name" value="YggX-like"/>
    <property type="match status" value="1"/>
</dbReference>
<evidence type="ECO:0000255" key="1">
    <source>
        <dbReference type="HAMAP-Rule" id="MF_00686"/>
    </source>
</evidence>
<gene>
    <name type="ordered locus">BURPS668_2644</name>
</gene>
<protein>
    <recommendedName>
        <fullName evidence="1">Probable Fe(2+)-trafficking protein</fullName>
    </recommendedName>
</protein>
<keyword id="KW-0408">Iron</keyword>
<feature type="chain" id="PRO_1000045026" description="Probable Fe(2+)-trafficking protein">
    <location>
        <begin position="1"/>
        <end position="91"/>
    </location>
</feature>
<reference key="1">
    <citation type="journal article" date="2010" name="Genome Biol. Evol.">
        <title>Continuing evolution of Burkholderia mallei through genome reduction and large-scale rearrangements.</title>
        <authorList>
            <person name="Losada L."/>
            <person name="Ronning C.M."/>
            <person name="DeShazer D."/>
            <person name="Woods D."/>
            <person name="Fedorova N."/>
            <person name="Kim H.S."/>
            <person name="Shabalina S.A."/>
            <person name="Pearson T.R."/>
            <person name="Brinkac L."/>
            <person name="Tan P."/>
            <person name="Nandi T."/>
            <person name="Crabtree J."/>
            <person name="Badger J."/>
            <person name="Beckstrom-Sternberg S."/>
            <person name="Saqib M."/>
            <person name="Schutzer S.E."/>
            <person name="Keim P."/>
            <person name="Nierman W.C."/>
        </authorList>
    </citation>
    <scope>NUCLEOTIDE SEQUENCE [LARGE SCALE GENOMIC DNA]</scope>
    <source>
        <strain>668</strain>
    </source>
</reference>